<reference key="1">
    <citation type="journal article" date="2004" name="Nucleic Acids Res.">
        <title>Whole genome comparisons of serotype 4b and 1/2a strains of the food-borne pathogen Listeria monocytogenes reveal new insights into the core genome components of this species.</title>
        <authorList>
            <person name="Nelson K.E."/>
            <person name="Fouts D.E."/>
            <person name="Mongodin E.F."/>
            <person name="Ravel J."/>
            <person name="DeBoy R.T."/>
            <person name="Kolonay J.F."/>
            <person name="Rasko D.A."/>
            <person name="Angiuoli S.V."/>
            <person name="Gill S.R."/>
            <person name="Paulsen I.T."/>
            <person name="Peterson J.D."/>
            <person name="White O."/>
            <person name="Nelson W.C."/>
            <person name="Nierman W.C."/>
            <person name="Beanan M.J."/>
            <person name="Brinkac L.M."/>
            <person name="Daugherty S.C."/>
            <person name="Dodson R.J."/>
            <person name="Durkin A.S."/>
            <person name="Madupu R."/>
            <person name="Haft D.H."/>
            <person name="Selengut J."/>
            <person name="Van Aken S.E."/>
            <person name="Khouri H.M."/>
            <person name="Fedorova N."/>
            <person name="Forberger H.A."/>
            <person name="Tran B."/>
            <person name="Kathariou S."/>
            <person name="Wonderling L.D."/>
            <person name="Uhlich G.A."/>
            <person name="Bayles D.O."/>
            <person name="Luchansky J.B."/>
            <person name="Fraser C.M."/>
        </authorList>
    </citation>
    <scope>NUCLEOTIDE SEQUENCE [LARGE SCALE GENOMIC DNA]</scope>
    <source>
        <strain>F2365</strain>
    </source>
</reference>
<feature type="chain" id="PRO_0000184858" description="3-methyl-2-oxobutanoate hydroxymethyltransferase">
    <location>
        <begin position="1"/>
        <end position="277"/>
    </location>
</feature>
<feature type="active site" description="Proton acceptor" evidence="1">
    <location>
        <position position="181"/>
    </location>
</feature>
<feature type="binding site" evidence="1">
    <location>
        <begin position="43"/>
        <end position="44"/>
    </location>
    <ligand>
        <name>3-methyl-2-oxobutanoate</name>
        <dbReference type="ChEBI" id="CHEBI:11851"/>
    </ligand>
</feature>
<feature type="binding site" evidence="1">
    <location>
        <position position="43"/>
    </location>
    <ligand>
        <name>Mg(2+)</name>
        <dbReference type="ChEBI" id="CHEBI:18420"/>
    </ligand>
</feature>
<feature type="binding site" evidence="1">
    <location>
        <position position="82"/>
    </location>
    <ligand>
        <name>3-methyl-2-oxobutanoate</name>
        <dbReference type="ChEBI" id="CHEBI:11851"/>
    </ligand>
</feature>
<feature type="binding site" evidence="1">
    <location>
        <position position="82"/>
    </location>
    <ligand>
        <name>Mg(2+)</name>
        <dbReference type="ChEBI" id="CHEBI:18420"/>
    </ligand>
</feature>
<feature type="binding site" evidence="1">
    <location>
        <position position="112"/>
    </location>
    <ligand>
        <name>3-methyl-2-oxobutanoate</name>
        <dbReference type="ChEBI" id="CHEBI:11851"/>
    </ligand>
</feature>
<feature type="binding site" evidence="1">
    <location>
        <position position="114"/>
    </location>
    <ligand>
        <name>Mg(2+)</name>
        <dbReference type="ChEBI" id="CHEBI:18420"/>
    </ligand>
</feature>
<organism>
    <name type="scientific">Listeria monocytogenes serotype 4b (strain F2365)</name>
    <dbReference type="NCBI Taxonomy" id="265669"/>
    <lineage>
        <taxon>Bacteria</taxon>
        <taxon>Bacillati</taxon>
        <taxon>Bacillota</taxon>
        <taxon>Bacilli</taxon>
        <taxon>Bacillales</taxon>
        <taxon>Listeriaceae</taxon>
        <taxon>Listeria</taxon>
    </lineage>
</organism>
<comment type="function">
    <text evidence="1">Catalyzes the reversible reaction in which hydroxymethyl group from 5,10-methylenetetrahydrofolate is transferred onto alpha-ketoisovalerate to form ketopantoate.</text>
</comment>
<comment type="catalytic activity">
    <reaction evidence="1">
        <text>3-methyl-2-oxobutanoate + (6R)-5,10-methylene-5,6,7,8-tetrahydrofolate + H2O = 2-dehydropantoate + (6S)-5,6,7,8-tetrahydrofolate</text>
        <dbReference type="Rhea" id="RHEA:11824"/>
        <dbReference type="ChEBI" id="CHEBI:11561"/>
        <dbReference type="ChEBI" id="CHEBI:11851"/>
        <dbReference type="ChEBI" id="CHEBI:15377"/>
        <dbReference type="ChEBI" id="CHEBI:15636"/>
        <dbReference type="ChEBI" id="CHEBI:57453"/>
        <dbReference type="EC" id="2.1.2.11"/>
    </reaction>
</comment>
<comment type="cofactor">
    <cofactor evidence="1">
        <name>Mg(2+)</name>
        <dbReference type="ChEBI" id="CHEBI:18420"/>
    </cofactor>
    <text evidence="1">Binds 1 Mg(2+) ion per subunit.</text>
</comment>
<comment type="pathway">
    <text evidence="1">Cofactor biosynthesis; (R)-pantothenate biosynthesis; (R)-pantoate from 3-methyl-2-oxobutanoate: step 1/2.</text>
</comment>
<comment type="subunit">
    <text evidence="1">Homodecamer; pentamer of dimers.</text>
</comment>
<comment type="subcellular location">
    <subcellularLocation>
        <location evidence="1">Cytoplasm</location>
    </subcellularLocation>
</comment>
<comment type="similarity">
    <text evidence="1">Belongs to the PanB family.</text>
</comment>
<sequence>MKRPVDFFAMKENGEKITMITAYDYPSAKNVEQAEADMILVGDSLGMVVLGYDSTVPVTMDDMIHHTKAVKRGAPDTFVVTDMPFMTYHGSVDETIQNARKIIQESGAHAVKLEGAGEVVNKIARLTEAGAPVVAHLGLTPQSVGLTGSYKVRAKSAQEAQELMDNALAVEAAGAIALVLEAIPRQLAEKVSKALSIPTIGIGAGVETDGQVLVYHDIIGYGISRRAKFVKAYADIDERIEPALASYVKEVKAATFPEVKHSFTMAEEDLKGLYGRE</sequence>
<name>PANB_LISMF</name>
<gene>
    <name evidence="1" type="primary">panB</name>
    <name type="ordered locus">LMOf2365_1931</name>
</gene>
<proteinExistence type="inferred from homology"/>
<protein>
    <recommendedName>
        <fullName evidence="1">3-methyl-2-oxobutanoate hydroxymethyltransferase</fullName>
        <ecNumber evidence="1">2.1.2.11</ecNumber>
    </recommendedName>
    <alternativeName>
        <fullName evidence="1">Ketopantoate hydroxymethyltransferase</fullName>
        <shortName evidence="1">KPHMT</shortName>
    </alternativeName>
</protein>
<dbReference type="EC" id="2.1.2.11" evidence="1"/>
<dbReference type="EMBL" id="AE017262">
    <property type="protein sequence ID" value="AAT04701.1"/>
    <property type="molecule type" value="Genomic_DNA"/>
</dbReference>
<dbReference type="RefSeq" id="WP_003726618.1">
    <property type="nucleotide sequence ID" value="NC_002973.6"/>
</dbReference>
<dbReference type="SMR" id="Q71YB3"/>
<dbReference type="KEGG" id="lmf:LMOf2365_1931"/>
<dbReference type="HOGENOM" id="CLU_036645_1_0_9"/>
<dbReference type="UniPathway" id="UPA00028">
    <property type="reaction ID" value="UER00003"/>
</dbReference>
<dbReference type="GO" id="GO:0005737">
    <property type="term" value="C:cytoplasm"/>
    <property type="evidence" value="ECO:0007669"/>
    <property type="project" value="UniProtKB-SubCell"/>
</dbReference>
<dbReference type="GO" id="GO:0003864">
    <property type="term" value="F:3-methyl-2-oxobutanoate hydroxymethyltransferase activity"/>
    <property type="evidence" value="ECO:0007669"/>
    <property type="project" value="UniProtKB-UniRule"/>
</dbReference>
<dbReference type="GO" id="GO:0000287">
    <property type="term" value="F:magnesium ion binding"/>
    <property type="evidence" value="ECO:0007669"/>
    <property type="project" value="TreeGrafter"/>
</dbReference>
<dbReference type="GO" id="GO:0015940">
    <property type="term" value="P:pantothenate biosynthetic process"/>
    <property type="evidence" value="ECO:0007669"/>
    <property type="project" value="UniProtKB-UniRule"/>
</dbReference>
<dbReference type="CDD" id="cd06557">
    <property type="entry name" value="KPHMT-like"/>
    <property type="match status" value="1"/>
</dbReference>
<dbReference type="FunFam" id="3.20.20.60:FF:000003">
    <property type="entry name" value="3-methyl-2-oxobutanoate hydroxymethyltransferase"/>
    <property type="match status" value="1"/>
</dbReference>
<dbReference type="Gene3D" id="3.20.20.60">
    <property type="entry name" value="Phosphoenolpyruvate-binding domains"/>
    <property type="match status" value="1"/>
</dbReference>
<dbReference type="HAMAP" id="MF_00156">
    <property type="entry name" value="PanB"/>
    <property type="match status" value="1"/>
</dbReference>
<dbReference type="InterPro" id="IPR003700">
    <property type="entry name" value="Pantoate_hydroxy_MeTrfase"/>
</dbReference>
<dbReference type="InterPro" id="IPR015813">
    <property type="entry name" value="Pyrv/PenolPyrv_kinase-like_dom"/>
</dbReference>
<dbReference type="InterPro" id="IPR040442">
    <property type="entry name" value="Pyrv_kinase-like_dom_sf"/>
</dbReference>
<dbReference type="NCBIfam" id="TIGR00222">
    <property type="entry name" value="panB"/>
    <property type="match status" value="1"/>
</dbReference>
<dbReference type="NCBIfam" id="NF001452">
    <property type="entry name" value="PRK00311.1"/>
    <property type="match status" value="1"/>
</dbReference>
<dbReference type="PANTHER" id="PTHR20881">
    <property type="entry name" value="3-METHYL-2-OXOBUTANOATE HYDROXYMETHYLTRANSFERASE"/>
    <property type="match status" value="1"/>
</dbReference>
<dbReference type="PANTHER" id="PTHR20881:SF0">
    <property type="entry name" value="3-METHYL-2-OXOBUTANOATE HYDROXYMETHYLTRANSFERASE"/>
    <property type="match status" value="1"/>
</dbReference>
<dbReference type="Pfam" id="PF02548">
    <property type="entry name" value="Pantoate_transf"/>
    <property type="match status" value="1"/>
</dbReference>
<dbReference type="PIRSF" id="PIRSF000388">
    <property type="entry name" value="Pantoate_hydroxy_MeTrfase"/>
    <property type="match status" value="1"/>
</dbReference>
<dbReference type="SUPFAM" id="SSF51621">
    <property type="entry name" value="Phosphoenolpyruvate/pyruvate domain"/>
    <property type="match status" value="1"/>
</dbReference>
<evidence type="ECO:0000255" key="1">
    <source>
        <dbReference type="HAMAP-Rule" id="MF_00156"/>
    </source>
</evidence>
<accession>Q71YB3</accession>
<keyword id="KW-0963">Cytoplasm</keyword>
<keyword id="KW-0460">Magnesium</keyword>
<keyword id="KW-0479">Metal-binding</keyword>
<keyword id="KW-0566">Pantothenate biosynthesis</keyword>
<keyword id="KW-0808">Transferase</keyword>